<organism>
    <name type="scientific">Brucella abortus biovar 1 (strain 9-941)</name>
    <dbReference type="NCBI Taxonomy" id="262698"/>
    <lineage>
        <taxon>Bacteria</taxon>
        <taxon>Pseudomonadati</taxon>
        <taxon>Pseudomonadota</taxon>
        <taxon>Alphaproteobacteria</taxon>
        <taxon>Hyphomicrobiales</taxon>
        <taxon>Brucellaceae</taxon>
        <taxon>Brucella/Ochrobactrum group</taxon>
        <taxon>Brucella</taxon>
    </lineage>
</organism>
<evidence type="ECO:0000255" key="1">
    <source>
        <dbReference type="HAMAP-Rule" id="MF_01320"/>
    </source>
</evidence>
<evidence type="ECO:0000256" key="2">
    <source>
        <dbReference type="SAM" id="MobiDB-lite"/>
    </source>
</evidence>
<evidence type="ECO:0000305" key="3"/>
<sequence length="277" mass="30168">MALKHFNPITPGQRQLVIVDRSELYKGKPVKSLTEGLSKKGGRNNTGRITVRFQGGGHKRSYRFIDFKRRKLDVVGTVERLEYDPNRTAFIALIRYTDGELAYILAPQRLAVGDQVVAGNSVDVKPGNAMPLSSMPVGTIIHNVELKPGKGGQIARSAGTYAQLVGRDQGMAILRLNSGEQRLVSGACFASVGAVSNPDHGNINDGKAGRSVWRGKRPHVRGVAMNPVDHPHGGGEGRTSGGRHPVTPWGKPTKGKKTRSNKATDKFIMRSRHQRKK</sequence>
<gene>
    <name evidence="1" type="primary">rplB</name>
    <name type="ordered locus">BruAb1_1235</name>
</gene>
<protein>
    <recommendedName>
        <fullName evidence="1">Large ribosomal subunit protein uL2</fullName>
    </recommendedName>
    <alternativeName>
        <fullName evidence="3">50S ribosomal protein L2</fullName>
    </alternativeName>
</protein>
<keyword id="KW-0687">Ribonucleoprotein</keyword>
<keyword id="KW-0689">Ribosomal protein</keyword>
<keyword id="KW-0694">RNA-binding</keyword>
<keyword id="KW-0699">rRNA-binding</keyword>
<dbReference type="EMBL" id="AE017223">
    <property type="protein sequence ID" value="AAX74573.1"/>
    <property type="molecule type" value="Genomic_DNA"/>
</dbReference>
<dbReference type="RefSeq" id="WP_002964359.1">
    <property type="nucleotide sequence ID" value="NC_006932.1"/>
</dbReference>
<dbReference type="SMR" id="Q57CR1"/>
<dbReference type="EnsemblBacteria" id="AAX74573">
    <property type="protein sequence ID" value="AAX74573"/>
    <property type="gene ID" value="BruAb1_1235"/>
</dbReference>
<dbReference type="GeneID" id="97533527"/>
<dbReference type="KEGG" id="bmb:BruAb1_1235"/>
<dbReference type="HOGENOM" id="CLU_036235_2_1_5"/>
<dbReference type="Proteomes" id="UP000000540">
    <property type="component" value="Chromosome I"/>
</dbReference>
<dbReference type="GO" id="GO:0015934">
    <property type="term" value="C:large ribosomal subunit"/>
    <property type="evidence" value="ECO:0007669"/>
    <property type="project" value="InterPro"/>
</dbReference>
<dbReference type="GO" id="GO:0019843">
    <property type="term" value="F:rRNA binding"/>
    <property type="evidence" value="ECO:0007669"/>
    <property type="project" value="UniProtKB-UniRule"/>
</dbReference>
<dbReference type="GO" id="GO:0003735">
    <property type="term" value="F:structural constituent of ribosome"/>
    <property type="evidence" value="ECO:0007669"/>
    <property type="project" value="InterPro"/>
</dbReference>
<dbReference type="GO" id="GO:0016740">
    <property type="term" value="F:transferase activity"/>
    <property type="evidence" value="ECO:0007669"/>
    <property type="project" value="InterPro"/>
</dbReference>
<dbReference type="GO" id="GO:0002181">
    <property type="term" value="P:cytoplasmic translation"/>
    <property type="evidence" value="ECO:0007669"/>
    <property type="project" value="TreeGrafter"/>
</dbReference>
<dbReference type="FunFam" id="2.30.30.30:FF:000055">
    <property type="entry name" value="50S ribosomal protein L2"/>
    <property type="match status" value="1"/>
</dbReference>
<dbReference type="FunFam" id="2.40.50.140:FF:000003">
    <property type="entry name" value="50S ribosomal protein L2"/>
    <property type="match status" value="1"/>
</dbReference>
<dbReference type="FunFam" id="4.10.950.10:FF:000001">
    <property type="entry name" value="50S ribosomal protein L2"/>
    <property type="match status" value="1"/>
</dbReference>
<dbReference type="Gene3D" id="2.30.30.30">
    <property type="match status" value="1"/>
</dbReference>
<dbReference type="Gene3D" id="2.40.50.140">
    <property type="entry name" value="Nucleic acid-binding proteins"/>
    <property type="match status" value="1"/>
</dbReference>
<dbReference type="Gene3D" id="4.10.950.10">
    <property type="entry name" value="Ribosomal protein L2, domain 3"/>
    <property type="match status" value="1"/>
</dbReference>
<dbReference type="HAMAP" id="MF_01320_B">
    <property type="entry name" value="Ribosomal_uL2_B"/>
    <property type="match status" value="1"/>
</dbReference>
<dbReference type="InterPro" id="IPR012340">
    <property type="entry name" value="NA-bd_OB-fold"/>
</dbReference>
<dbReference type="InterPro" id="IPR014722">
    <property type="entry name" value="Rib_uL2_dom2"/>
</dbReference>
<dbReference type="InterPro" id="IPR002171">
    <property type="entry name" value="Ribosomal_uL2"/>
</dbReference>
<dbReference type="InterPro" id="IPR005880">
    <property type="entry name" value="Ribosomal_uL2_bac/org-type"/>
</dbReference>
<dbReference type="InterPro" id="IPR022669">
    <property type="entry name" value="Ribosomal_uL2_C"/>
</dbReference>
<dbReference type="InterPro" id="IPR022671">
    <property type="entry name" value="Ribosomal_uL2_CS"/>
</dbReference>
<dbReference type="InterPro" id="IPR014726">
    <property type="entry name" value="Ribosomal_uL2_dom3"/>
</dbReference>
<dbReference type="InterPro" id="IPR022666">
    <property type="entry name" value="Ribosomal_uL2_RNA-bd_dom"/>
</dbReference>
<dbReference type="InterPro" id="IPR008991">
    <property type="entry name" value="Translation_prot_SH3-like_sf"/>
</dbReference>
<dbReference type="NCBIfam" id="TIGR01171">
    <property type="entry name" value="rplB_bact"/>
    <property type="match status" value="1"/>
</dbReference>
<dbReference type="PANTHER" id="PTHR13691:SF5">
    <property type="entry name" value="LARGE RIBOSOMAL SUBUNIT PROTEIN UL2M"/>
    <property type="match status" value="1"/>
</dbReference>
<dbReference type="PANTHER" id="PTHR13691">
    <property type="entry name" value="RIBOSOMAL PROTEIN L2"/>
    <property type="match status" value="1"/>
</dbReference>
<dbReference type="Pfam" id="PF00181">
    <property type="entry name" value="Ribosomal_L2"/>
    <property type="match status" value="1"/>
</dbReference>
<dbReference type="Pfam" id="PF03947">
    <property type="entry name" value="Ribosomal_L2_C"/>
    <property type="match status" value="1"/>
</dbReference>
<dbReference type="PIRSF" id="PIRSF002158">
    <property type="entry name" value="Ribosomal_L2"/>
    <property type="match status" value="1"/>
</dbReference>
<dbReference type="SMART" id="SM01383">
    <property type="entry name" value="Ribosomal_L2"/>
    <property type="match status" value="1"/>
</dbReference>
<dbReference type="SMART" id="SM01382">
    <property type="entry name" value="Ribosomal_L2_C"/>
    <property type="match status" value="1"/>
</dbReference>
<dbReference type="SUPFAM" id="SSF50249">
    <property type="entry name" value="Nucleic acid-binding proteins"/>
    <property type="match status" value="1"/>
</dbReference>
<dbReference type="SUPFAM" id="SSF50104">
    <property type="entry name" value="Translation proteins SH3-like domain"/>
    <property type="match status" value="1"/>
</dbReference>
<dbReference type="PROSITE" id="PS00467">
    <property type="entry name" value="RIBOSOMAL_L2"/>
    <property type="match status" value="1"/>
</dbReference>
<reference key="1">
    <citation type="journal article" date="2005" name="J. Bacteriol.">
        <title>Completion of the genome sequence of Brucella abortus and comparison to the highly similar genomes of Brucella melitensis and Brucella suis.</title>
        <authorList>
            <person name="Halling S.M."/>
            <person name="Peterson-Burch B.D."/>
            <person name="Bricker B.J."/>
            <person name="Zuerner R.L."/>
            <person name="Qing Z."/>
            <person name="Li L.-L."/>
            <person name="Kapur V."/>
            <person name="Alt D.P."/>
            <person name="Olsen S.C."/>
        </authorList>
    </citation>
    <scope>NUCLEOTIDE SEQUENCE [LARGE SCALE GENOMIC DNA]</scope>
    <source>
        <strain>9-941</strain>
    </source>
</reference>
<proteinExistence type="inferred from homology"/>
<name>RL2_BRUAB</name>
<comment type="function">
    <text evidence="1">One of the primary rRNA binding proteins. Required for association of the 30S and 50S subunits to form the 70S ribosome, for tRNA binding and peptide bond formation. It has been suggested to have peptidyltransferase activity; this is somewhat controversial. Makes several contacts with the 16S rRNA in the 70S ribosome.</text>
</comment>
<comment type="subunit">
    <text evidence="1">Part of the 50S ribosomal subunit. Forms a bridge to the 30S subunit in the 70S ribosome.</text>
</comment>
<comment type="similarity">
    <text evidence="1">Belongs to the universal ribosomal protein uL2 family.</text>
</comment>
<accession>Q57CR1</accession>
<feature type="chain" id="PRO_0000237162" description="Large ribosomal subunit protein uL2">
    <location>
        <begin position="1"/>
        <end position="277"/>
    </location>
</feature>
<feature type="region of interest" description="Disordered" evidence="2">
    <location>
        <begin position="222"/>
        <end position="277"/>
    </location>
</feature>